<name>TPMT_SHELP</name>
<organism>
    <name type="scientific">Shewanella loihica (strain ATCC BAA-1088 / PV-4)</name>
    <dbReference type="NCBI Taxonomy" id="323850"/>
    <lineage>
        <taxon>Bacteria</taxon>
        <taxon>Pseudomonadati</taxon>
        <taxon>Pseudomonadota</taxon>
        <taxon>Gammaproteobacteria</taxon>
        <taxon>Alteromonadales</taxon>
        <taxon>Shewanellaceae</taxon>
        <taxon>Shewanella</taxon>
    </lineage>
</organism>
<protein>
    <recommendedName>
        <fullName evidence="1">Thiopurine S-methyltransferase</fullName>
        <ecNumber evidence="1">2.1.1.67</ecNumber>
    </recommendedName>
    <alternativeName>
        <fullName evidence="1">Thiopurine methyltransferase</fullName>
    </alternativeName>
</protein>
<dbReference type="EC" id="2.1.1.67" evidence="1"/>
<dbReference type="EMBL" id="CP000606">
    <property type="protein sequence ID" value="ABO25127.1"/>
    <property type="molecule type" value="Genomic_DNA"/>
</dbReference>
<dbReference type="RefSeq" id="WP_011867057.1">
    <property type="nucleotide sequence ID" value="NC_009092.1"/>
</dbReference>
<dbReference type="SMR" id="A3QI29"/>
<dbReference type="KEGG" id="slo:Shew_3261"/>
<dbReference type="eggNOG" id="COG0500">
    <property type="taxonomic scope" value="Bacteria"/>
</dbReference>
<dbReference type="HOGENOM" id="CLU_085515_1_0_6"/>
<dbReference type="OrthoDB" id="9778208at2"/>
<dbReference type="Proteomes" id="UP000001558">
    <property type="component" value="Chromosome"/>
</dbReference>
<dbReference type="GO" id="GO:0005737">
    <property type="term" value="C:cytoplasm"/>
    <property type="evidence" value="ECO:0007669"/>
    <property type="project" value="UniProtKB-SubCell"/>
</dbReference>
<dbReference type="GO" id="GO:0008119">
    <property type="term" value="F:thiopurine S-methyltransferase activity"/>
    <property type="evidence" value="ECO:0007669"/>
    <property type="project" value="UniProtKB-UniRule"/>
</dbReference>
<dbReference type="GO" id="GO:0032259">
    <property type="term" value="P:methylation"/>
    <property type="evidence" value="ECO:0007669"/>
    <property type="project" value="UniProtKB-KW"/>
</dbReference>
<dbReference type="GO" id="GO:0010038">
    <property type="term" value="P:response to metal ion"/>
    <property type="evidence" value="ECO:0007669"/>
    <property type="project" value="InterPro"/>
</dbReference>
<dbReference type="FunFam" id="3.40.50.150:FF:000101">
    <property type="entry name" value="Thiopurine S-methyltransferase"/>
    <property type="match status" value="1"/>
</dbReference>
<dbReference type="Gene3D" id="3.40.50.150">
    <property type="entry name" value="Vaccinia Virus protein VP39"/>
    <property type="match status" value="1"/>
</dbReference>
<dbReference type="HAMAP" id="MF_00812">
    <property type="entry name" value="Thiopur_methtran"/>
    <property type="match status" value="1"/>
</dbReference>
<dbReference type="InterPro" id="IPR029063">
    <property type="entry name" value="SAM-dependent_MTases_sf"/>
</dbReference>
<dbReference type="InterPro" id="IPR022474">
    <property type="entry name" value="Thiopur_S-MeTfrase_Se/Te_detox"/>
</dbReference>
<dbReference type="InterPro" id="IPR025835">
    <property type="entry name" value="Thiopurine_S-MeTrfase"/>
</dbReference>
<dbReference type="InterPro" id="IPR008854">
    <property type="entry name" value="TPMT"/>
</dbReference>
<dbReference type="NCBIfam" id="NF009732">
    <property type="entry name" value="PRK13255.1"/>
    <property type="match status" value="1"/>
</dbReference>
<dbReference type="NCBIfam" id="TIGR03840">
    <property type="entry name" value="TMPT_Se_Te"/>
    <property type="match status" value="1"/>
</dbReference>
<dbReference type="PANTHER" id="PTHR10259">
    <property type="entry name" value="THIOPURINE S-METHYLTRANSFERASE"/>
    <property type="match status" value="1"/>
</dbReference>
<dbReference type="PANTHER" id="PTHR10259:SF11">
    <property type="entry name" value="THIOPURINE S-METHYLTRANSFERASE"/>
    <property type="match status" value="1"/>
</dbReference>
<dbReference type="Pfam" id="PF05724">
    <property type="entry name" value="TPMT"/>
    <property type="match status" value="1"/>
</dbReference>
<dbReference type="PIRSF" id="PIRSF023956">
    <property type="entry name" value="Thiopurine_S-methyltransferase"/>
    <property type="match status" value="1"/>
</dbReference>
<dbReference type="SUPFAM" id="SSF53335">
    <property type="entry name" value="S-adenosyl-L-methionine-dependent methyltransferases"/>
    <property type="match status" value="1"/>
</dbReference>
<dbReference type="PROSITE" id="PS51585">
    <property type="entry name" value="SAM_MT_TPMT"/>
    <property type="match status" value="1"/>
</dbReference>
<comment type="catalytic activity">
    <reaction evidence="1">
        <text>S-adenosyl-L-methionine + a thiopurine = S-adenosyl-L-homocysteine + a thiopurine S-methylether.</text>
        <dbReference type="EC" id="2.1.1.67"/>
    </reaction>
</comment>
<comment type="subcellular location">
    <subcellularLocation>
        <location evidence="1">Cytoplasm</location>
    </subcellularLocation>
</comment>
<comment type="similarity">
    <text evidence="1">Belongs to the class I-like SAM-binding methyltransferase superfamily. TPMT family.</text>
</comment>
<evidence type="ECO:0000255" key="1">
    <source>
        <dbReference type="HAMAP-Rule" id="MF_00812"/>
    </source>
</evidence>
<gene>
    <name evidence="1" type="primary">tpm</name>
    <name type="ordered locus">Shew_3261</name>
</gene>
<proteinExistence type="inferred from homology"/>
<accession>A3QI29</accession>
<reference key="1">
    <citation type="submission" date="2007-03" db="EMBL/GenBank/DDBJ databases">
        <title>Complete sequence of Shewanella loihica PV-4.</title>
        <authorList>
            <consortium name="US DOE Joint Genome Institute"/>
            <person name="Copeland A."/>
            <person name="Lucas S."/>
            <person name="Lapidus A."/>
            <person name="Barry K."/>
            <person name="Detter J.C."/>
            <person name="Glavina del Rio T."/>
            <person name="Hammon N."/>
            <person name="Israni S."/>
            <person name="Dalin E."/>
            <person name="Tice H."/>
            <person name="Pitluck S."/>
            <person name="Chain P."/>
            <person name="Malfatti S."/>
            <person name="Shin M."/>
            <person name="Vergez L."/>
            <person name="Schmutz J."/>
            <person name="Larimer F."/>
            <person name="Land M."/>
            <person name="Hauser L."/>
            <person name="Kyrpides N."/>
            <person name="Mikhailova N."/>
            <person name="Romine M.F."/>
            <person name="Serres G."/>
            <person name="Fredrickson J."/>
            <person name="Tiedje J."/>
            <person name="Richardson P."/>
        </authorList>
    </citation>
    <scope>NUCLEOTIDE SEQUENCE [LARGE SCALE GENOMIC DNA]</scope>
    <source>
        <strain>ATCC BAA-1088 / PV-4</strain>
    </source>
</reference>
<sequence length="218" mass="24955">MQPSFWHDKWASQQIGFHLDEVNALLIDYWPQLELAAGSQVFVPLCGKTLDLCYLAEQGLEVIGCELNQSAVEQFFSDNELPVERQSSGEHECYRTEQVSIYQGDLFRLPKEPLEAVSGFYDRAALIAWPPEMRQQYVECLAGLLPPKSIGLLITLDYPQEALNGPPFAVSDAWIQEHMSPYFEIECLSTQDVLAENPRFVKKQVPWLTESVYRLVRR</sequence>
<feature type="chain" id="PRO_1000047221" description="Thiopurine S-methyltransferase">
    <location>
        <begin position="1"/>
        <end position="218"/>
    </location>
</feature>
<feature type="binding site" evidence="1">
    <location>
        <position position="10"/>
    </location>
    <ligand>
        <name>S-adenosyl-L-methionine</name>
        <dbReference type="ChEBI" id="CHEBI:59789"/>
    </ligand>
</feature>
<feature type="binding site" evidence="1">
    <location>
        <position position="45"/>
    </location>
    <ligand>
        <name>S-adenosyl-L-methionine</name>
        <dbReference type="ChEBI" id="CHEBI:59789"/>
    </ligand>
</feature>
<feature type="binding site" evidence="1">
    <location>
        <position position="66"/>
    </location>
    <ligand>
        <name>S-adenosyl-L-methionine</name>
        <dbReference type="ChEBI" id="CHEBI:59789"/>
    </ligand>
</feature>
<feature type="binding site" evidence="1">
    <location>
        <position position="123"/>
    </location>
    <ligand>
        <name>S-adenosyl-L-methionine</name>
        <dbReference type="ChEBI" id="CHEBI:59789"/>
    </ligand>
</feature>
<keyword id="KW-0963">Cytoplasm</keyword>
<keyword id="KW-0489">Methyltransferase</keyword>
<keyword id="KW-1185">Reference proteome</keyword>
<keyword id="KW-0949">S-adenosyl-L-methionine</keyword>
<keyword id="KW-0808">Transferase</keyword>